<evidence type="ECO:0000255" key="1">
    <source>
        <dbReference type="HAMAP-Rule" id="MF_01204"/>
    </source>
</evidence>
<name>Y5049_STRCO</name>
<gene>
    <name type="ordered locus">SCO5049</name>
    <name type="ORF">SCK7.22c</name>
</gene>
<reference key="1">
    <citation type="journal article" date="2002" name="Nature">
        <title>Complete genome sequence of the model actinomycete Streptomyces coelicolor A3(2).</title>
        <authorList>
            <person name="Bentley S.D."/>
            <person name="Chater K.F."/>
            <person name="Cerdeno-Tarraga A.-M."/>
            <person name="Challis G.L."/>
            <person name="Thomson N.R."/>
            <person name="James K.D."/>
            <person name="Harris D.E."/>
            <person name="Quail M.A."/>
            <person name="Kieser H."/>
            <person name="Harper D."/>
            <person name="Bateman A."/>
            <person name="Brown S."/>
            <person name="Chandra G."/>
            <person name="Chen C.W."/>
            <person name="Collins M."/>
            <person name="Cronin A."/>
            <person name="Fraser A."/>
            <person name="Goble A."/>
            <person name="Hidalgo J."/>
            <person name="Hornsby T."/>
            <person name="Howarth S."/>
            <person name="Huang C.-H."/>
            <person name="Kieser T."/>
            <person name="Larke L."/>
            <person name="Murphy L.D."/>
            <person name="Oliver K."/>
            <person name="O'Neil S."/>
            <person name="Rabbinowitsch E."/>
            <person name="Rajandream M.A."/>
            <person name="Rutherford K.M."/>
            <person name="Rutter S."/>
            <person name="Seeger K."/>
            <person name="Saunders D."/>
            <person name="Sharp S."/>
            <person name="Squares R."/>
            <person name="Squares S."/>
            <person name="Taylor K."/>
            <person name="Warren T."/>
            <person name="Wietzorrek A."/>
            <person name="Woodward J.R."/>
            <person name="Barrell B.G."/>
            <person name="Parkhill J."/>
            <person name="Hopwood D.A."/>
        </authorList>
    </citation>
    <scope>NUCLEOTIDE SEQUENCE [LARGE SCALE GENOMIC DNA]</scope>
    <source>
        <strain>ATCC BAA-471 / A3(2) / M145</strain>
    </source>
</reference>
<feature type="chain" id="PRO_0000072732" description="Putative NADH dehydrogenase/NAD(P)H nitroreductase SCO5049">
    <location>
        <begin position="1"/>
        <end position="196"/>
    </location>
</feature>
<sequence length="196" mass="21473">MSLVLDPAAQDLLFREARTANTFTDEPVTDEQVQAIYDLVKYGPTAFNQSPLRITLVRSPEARERLVAHMAEGNRPKTAAAPLVAILSADNEFHEELPELFPHFPAAKDAFFSERPVREGAATLNAALQAAYFIVGVRAAGLAAGPMTGLDFEGVRKEFLDDDHTPLMVVNIGRPGPDAWFPRSPRLAYDQVVTTV</sequence>
<comment type="cofactor">
    <cofactor evidence="1">
        <name>FMN</name>
        <dbReference type="ChEBI" id="CHEBI:58210"/>
    </cofactor>
</comment>
<comment type="similarity">
    <text evidence="1">Belongs to the nitroreductase family. HadB/RutE subfamily.</text>
</comment>
<proteinExistence type="inferred from homology"/>
<dbReference type="EC" id="1.-.-.-" evidence="1"/>
<dbReference type="EMBL" id="AL939122">
    <property type="protein sequence ID" value="CAC05894.1"/>
    <property type="molecule type" value="Genomic_DNA"/>
</dbReference>
<dbReference type="RefSeq" id="NP_629201.1">
    <property type="nucleotide sequence ID" value="NC_003888.3"/>
</dbReference>
<dbReference type="RefSeq" id="WP_003973928.1">
    <property type="nucleotide sequence ID" value="NZ_VNID01000008.1"/>
</dbReference>
<dbReference type="SMR" id="Q9FBN0"/>
<dbReference type="STRING" id="100226.gene:17762698"/>
<dbReference type="PaxDb" id="100226-SCO5049"/>
<dbReference type="KEGG" id="sco:SCO5049"/>
<dbReference type="PATRIC" id="fig|100226.15.peg.5129"/>
<dbReference type="eggNOG" id="COG0778">
    <property type="taxonomic scope" value="Bacteria"/>
</dbReference>
<dbReference type="HOGENOM" id="CLU_084441_0_0_11"/>
<dbReference type="InParanoid" id="Q9FBN0"/>
<dbReference type="OrthoDB" id="9784375at2"/>
<dbReference type="PhylomeDB" id="Q9FBN0"/>
<dbReference type="Proteomes" id="UP000001973">
    <property type="component" value="Chromosome"/>
</dbReference>
<dbReference type="GO" id="GO:0016491">
    <property type="term" value="F:oxidoreductase activity"/>
    <property type="evidence" value="ECO:0007669"/>
    <property type="project" value="UniProtKB-UniRule"/>
</dbReference>
<dbReference type="CDD" id="cd02148">
    <property type="entry name" value="RutE-like"/>
    <property type="match status" value="1"/>
</dbReference>
<dbReference type="Gene3D" id="3.40.109.10">
    <property type="entry name" value="NADH Oxidase"/>
    <property type="match status" value="1"/>
</dbReference>
<dbReference type="HAMAP" id="MF_01204">
    <property type="entry name" value="Oxidoreductase_RutE_HadB"/>
    <property type="match status" value="1"/>
</dbReference>
<dbReference type="InterPro" id="IPR029479">
    <property type="entry name" value="Nitroreductase"/>
</dbReference>
<dbReference type="InterPro" id="IPR000415">
    <property type="entry name" value="Nitroreductase-like"/>
</dbReference>
<dbReference type="InterPro" id="IPR050461">
    <property type="entry name" value="Nitroreductase_HadB/RutE"/>
</dbReference>
<dbReference type="InterPro" id="IPR023936">
    <property type="entry name" value="RutE-like"/>
</dbReference>
<dbReference type="NCBIfam" id="NF003768">
    <property type="entry name" value="PRK05365.1"/>
    <property type="match status" value="1"/>
</dbReference>
<dbReference type="PANTHER" id="PTHR43543">
    <property type="entry name" value="MALONIC SEMIALDEHYDE REDUCTASE RUTE-RELATED"/>
    <property type="match status" value="1"/>
</dbReference>
<dbReference type="PANTHER" id="PTHR43543:SF1">
    <property type="entry name" value="MALONIC SEMIALDEHYDE REDUCTASE RUTE-RELATED"/>
    <property type="match status" value="1"/>
</dbReference>
<dbReference type="Pfam" id="PF00881">
    <property type="entry name" value="Nitroreductase"/>
    <property type="match status" value="1"/>
</dbReference>
<dbReference type="SUPFAM" id="SSF55469">
    <property type="entry name" value="FMN-dependent nitroreductase-like"/>
    <property type="match status" value="1"/>
</dbReference>
<accession>Q9FBN0</accession>
<organism>
    <name type="scientific">Streptomyces coelicolor (strain ATCC BAA-471 / A3(2) / M145)</name>
    <dbReference type="NCBI Taxonomy" id="100226"/>
    <lineage>
        <taxon>Bacteria</taxon>
        <taxon>Bacillati</taxon>
        <taxon>Actinomycetota</taxon>
        <taxon>Actinomycetes</taxon>
        <taxon>Kitasatosporales</taxon>
        <taxon>Streptomycetaceae</taxon>
        <taxon>Streptomyces</taxon>
        <taxon>Streptomyces albidoflavus group</taxon>
    </lineage>
</organism>
<keyword id="KW-0285">Flavoprotein</keyword>
<keyword id="KW-0288">FMN</keyword>
<keyword id="KW-0520">NAD</keyword>
<keyword id="KW-0521">NADP</keyword>
<keyword id="KW-0560">Oxidoreductase</keyword>
<keyword id="KW-1185">Reference proteome</keyword>
<protein>
    <recommendedName>
        <fullName evidence="1">Putative NADH dehydrogenase/NAD(P)H nitroreductase SCO5049</fullName>
        <ecNumber evidence="1">1.-.-.-</ecNumber>
    </recommendedName>
</protein>